<gene>
    <name type="primary">manA-1</name>
    <name type="synonym">man1-1</name>
    <name type="ORF">ATEG_08654</name>
</gene>
<feature type="signal peptide" evidence="4">
    <location>
        <begin position="1"/>
        <end position="20"/>
    </location>
</feature>
<feature type="chain" id="PRO_0000393703" description="Probable mannan endo-1,4-beta-mannosidase A-1">
    <location>
        <begin position="21"/>
        <end position="388"/>
    </location>
</feature>
<feature type="active site" description="Proton donor" evidence="3">
    <location>
        <position position="207"/>
    </location>
</feature>
<feature type="active site" description="Nucleophile" evidence="3">
    <location>
        <position position="315"/>
    </location>
</feature>
<feature type="binding site" evidence="2">
    <location>
        <position position="93"/>
    </location>
    <ligand>
        <name>substrate</name>
    </ligand>
</feature>
<feature type="binding site" evidence="2">
    <location>
        <position position="206"/>
    </location>
    <ligand>
        <name>substrate</name>
    </ligand>
</feature>
<feature type="binding site" evidence="2">
    <location>
        <position position="282"/>
    </location>
    <ligand>
        <name>substrate</name>
    </ligand>
</feature>
<feature type="binding site" evidence="2">
    <location>
        <position position="345"/>
    </location>
    <ligand>
        <name>substrate</name>
    </ligand>
</feature>
<feature type="glycosylation site" description="N-linked (GlcNAc...) asparagine" evidence="4">
    <location>
        <position position="264"/>
    </location>
</feature>
<feature type="glycosylation site" description="N-linked (GlcNAc...) asparagine" evidence="4">
    <location>
        <position position="335"/>
    </location>
</feature>
<name>MANA1_ASPTN</name>
<dbReference type="EC" id="3.2.1.78"/>
<dbReference type="EMBL" id="CH476606">
    <property type="protein sequence ID" value="EAU30786.1"/>
    <property type="molecule type" value="Genomic_DNA"/>
</dbReference>
<dbReference type="RefSeq" id="XP_001217240.1">
    <property type="nucleotide sequence ID" value="XM_001217239.1"/>
</dbReference>
<dbReference type="SMR" id="Q0CCD0"/>
<dbReference type="STRING" id="341663.Q0CCD0"/>
<dbReference type="GlyCosmos" id="Q0CCD0">
    <property type="glycosylation" value="2 sites, No reported glycans"/>
</dbReference>
<dbReference type="EnsemblFungi" id="EAU30786">
    <property type="protein sequence ID" value="EAU30786"/>
    <property type="gene ID" value="ATEG_08654"/>
</dbReference>
<dbReference type="GeneID" id="4323372"/>
<dbReference type="VEuPathDB" id="FungiDB:ATEG_08654"/>
<dbReference type="eggNOG" id="ENOG502QS4Q">
    <property type="taxonomic scope" value="Eukaryota"/>
</dbReference>
<dbReference type="HOGENOM" id="CLU_031603_4_1_1"/>
<dbReference type="OMA" id="MNLGIDT"/>
<dbReference type="OrthoDB" id="406631at2759"/>
<dbReference type="Proteomes" id="UP000007963">
    <property type="component" value="Unassembled WGS sequence"/>
</dbReference>
<dbReference type="GO" id="GO:0005576">
    <property type="term" value="C:extracellular region"/>
    <property type="evidence" value="ECO:0007669"/>
    <property type="project" value="UniProtKB-SubCell"/>
</dbReference>
<dbReference type="GO" id="GO:0016985">
    <property type="term" value="F:mannan endo-1,4-beta-mannosidase activity"/>
    <property type="evidence" value="ECO:0007669"/>
    <property type="project" value="UniProtKB-EC"/>
</dbReference>
<dbReference type="GO" id="GO:0046355">
    <property type="term" value="P:mannan catabolic process"/>
    <property type="evidence" value="ECO:0007669"/>
    <property type="project" value="UniProtKB-ARBA"/>
</dbReference>
<dbReference type="FunFam" id="3.20.20.80:FF:000076">
    <property type="entry name" value="Mannan endo-1,4-beta-mannosidase A"/>
    <property type="match status" value="1"/>
</dbReference>
<dbReference type="Gene3D" id="3.20.20.80">
    <property type="entry name" value="Glycosidases"/>
    <property type="match status" value="1"/>
</dbReference>
<dbReference type="InterPro" id="IPR001547">
    <property type="entry name" value="Glyco_hydro_5"/>
</dbReference>
<dbReference type="InterPro" id="IPR017853">
    <property type="entry name" value="Glycoside_hydrolase_SF"/>
</dbReference>
<dbReference type="InterPro" id="IPR045053">
    <property type="entry name" value="MAN-like"/>
</dbReference>
<dbReference type="PANTHER" id="PTHR31451">
    <property type="match status" value="1"/>
</dbReference>
<dbReference type="PANTHER" id="PTHR31451:SF39">
    <property type="entry name" value="MANNAN ENDO-1,4-BETA-MANNOSIDASE 1"/>
    <property type="match status" value="1"/>
</dbReference>
<dbReference type="Pfam" id="PF00150">
    <property type="entry name" value="Cellulase"/>
    <property type="match status" value="1"/>
</dbReference>
<dbReference type="SUPFAM" id="SSF51445">
    <property type="entry name" value="(Trans)glycosidases"/>
    <property type="match status" value="1"/>
</dbReference>
<sequence length="388" mass="41993">MKLSPLMALAGLASAQLALALPQATPSASATPSPTPGDGSFASTNGLQFVIDGETGYFAGSNSYWIGFLTNNADVDLVFTHMKEAGLRILRVWGFNDVNEKPADGTVWFQMHADGQSTINTGADGLQRLDYVVQSAEKHGIKLIVNFVNYWDDYGGMNAYVQAYGGSDNTDFYASKDMQAAYRAYIKAVVSRYLDSPAIFAWELANEPRCQGCAPSVLHDWIDSTSQYIKSLDSKHMTCIGDEGFGLDIGSDGSYPYGYSEGGNFTMSLALPTIDFGTFHLYPSSWGTNNDWGNGWVASHGAACKAAGKPCLFEEYGVTSDHCAVEKPWQMTALNTTGIAADLYWQYGDQLSSGQSPNDGNTIYYGTDEFTCLVTDHIASIGSRATRK</sequence>
<proteinExistence type="inferred from homology"/>
<keyword id="KW-0119">Carbohydrate metabolism</keyword>
<keyword id="KW-0325">Glycoprotein</keyword>
<keyword id="KW-0326">Glycosidase</keyword>
<keyword id="KW-0378">Hydrolase</keyword>
<keyword id="KW-1185">Reference proteome</keyword>
<keyword id="KW-0964">Secreted</keyword>
<keyword id="KW-0732">Signal</keyword>
<protein>
    <recommendedName>
        <fullName>Probable mannan endo-1,4-beta-mannosidase A-1</fullName>
        <ecNumber>3.2.1.78</ecNumber>
    </recommendedName>
    <alternativeName>
        <fullName>Endo-beta-1,4-mannanase A-1</fullName>
    </alternativeName>
</protein>
<organism>
    <name type="scientific">Aspergillus terreus (strain NIH 2624 / FGSC A1156)</name>
    <dbReference type="NCBI Taxonomy" id="341663"/>
    <lineage>
        <taxon>Eukaryota</taxon>
        <taxon>Fungi</taxon>
        <taxon>Dikarya</taxon>
        <taxon>Ascomycota</taxon>
        <taxon>Pezizomycotina</taxon>
        <taxon>Eurotiomycetes</taxon>
        <taxon>Eurotiomycetidae</taxon>
        <taxon>Eurotiales</taxon>
        <taxon>Aspergillaceae</taxon>
        <taxon>Aspergillus</taxon>
        <taxon>Aspergillus subgen. Circumdati</taxon>
    </lineage>
</organism>
<accession>Q0CCD0</accession>
<evidence type="ECO:0000250" key="1"/>
<evidence type="ECO:0000250" key="2">
    <source>
        <dbReference type="UniProtKB" id="B4XC07"/>
    </source>
</evidence>
<evidence type="ECO:0000250" key="3">
    <source>
        <dbReference type="UniProtKB" id="Q99036"/>
    </source>
</evidence>
<evidence type="ECO:0000255" key="4"/>
<evidence type="ECO:0000305" key="5"/>
<comment type="function">
    <text evidence="1">Endo-1,4-mannanase, a crucial enzyme for depolymerization of seed galactomannans and wood galactoglucomannans.</text>
</comment>
<comment type="catalytic activity">
    <reaction>
        <text>Random hydrolysis of (1-&gt;4)-beta-D-mannosidic linkages in mannans, galactomannans and glucomannans.</text>
        <dbReference type="EC" id="3.2.1.78"/>
    </reaction>
</comment>
<comment type="subcellular location">
    <subcellularLocation>
        <location evidence="1">Secreted</location>
    </subcellularLocation>
</comment>
<comment type="similarity">
    <text evidence="5">Belongs to the glycosyl hydrolase 5 (cellulase A) family.</text>
</comment>
<reference key="1">
    <citation type="submission" date="2005-09" db="EMBL/GenBank/DDBJ databases">
        <title>Annotation of the Aspergillus terreus NIH2624 genome.</title>
        <authorList>
            <person name="Birren B.W."/>
            <person name="Lander E.S."/>
            <person name="Galagan J.E."/>
            <person name="Nusbaum C."/>
            <person name="Devon K."/>
            <person name="Henn M."/>
            <person name="Ma L.-J."/>
            <person name="Jaffe D.B."/>
            <person name="Butler J."/>
            <person name="Alvarez P."/>
            <person name="Gnerre S."/>
            <person name="Grabherr M."/>
            <person name="Kleber M."/>
            <person name="Mauceli E.W."/>
            <person name="Brockman W."/>
            <person name="Rounsley S."/>
            <person name="Young S.K."/>
            <person name="LaButti K."/>
            <person name="Pushparaj V."/>
            <person name="DeCaprio D."/>
            <person name="Crawford M."/>
            <person name="Koehrsen M."/>
            <person name="Engels R."/>
            <person name="Montgomery P."/>
            <person name="Pearson M."/>
            <person name="Howarth C."/>
            <person name="Larson L."/>
            <person name="Luoma S."/>
            <person name="White J."/>
            <person name="Alvarado L."/>
            <person name="Kodira C.D."/>
            <person name="Zeng Q."/>
            <person name="Oleary S."/>
            <person name="Yandava C."/>
            <person name="Denning D.W."/>
            <person name="Nierman W.C."/>
            <person name="Milne T."/>
            <person name="Madden K."/>
        </authorList>
    </citation>
    <scope>NUCLEOTIDE SEQUENCE [LARGE SCALE GENOMIC DNA]</scope>
    <source>
        <strain>NIH 2624 / FGSC A1156</strain>
    </source>
</reference>